<gene>
    <name evidence="1" type="primary">fusA</name>
    <name type="ordered locus">MARTH_orf312</name>
</gene>
<proteinExistence type="inferred from homology"/>
<protein>
    <recommendedName>
        <fullName evidence="1">Elongation factor G</fullName>
        <shortName evidence="1">EF-G</shortName>
    </recommendedName>
</protein>
<name>EFG_META1</name>
<organism>
    <name type="scientific">Metamycoplasma arthritidis (strain 158L3-1)</name>
    <name type="common">Mycoplasma arthritidis</name>
    <dbReference type="NCBI Taxonomy" id="243272"/>
    <lineage>
        <taxon>Bacteria</taxon>
        <taxon>Bacillati</taxon>
        <taxon>Mycoplasmatota</taxon>
        <taxon>Mycoplasmoidales</taxon>
        <taxon>Metamycoplasmataceae</taxon>
        <taxon>Metamycoplasma</taxon>
    </lineage>
</organism>
<evidence type="ECO:0000255" key="1">
    <source>
        <dbReference type="HAMAP-Rule" id="MF_00054"/>
    </source>
</evidence>
<accession>B3PME9</accession>
<feature type="chain" id="PRO_1000091735" description="Elongation factor G">
    <location>
        <begin position="1"/>
        <end position="697"/>
    </location>
</feature>
<feature type="domain" description="tr-type G">
    <location>
        <begin position="8"/>
        <end position="282"/>
    </location>
</feature>
<feature type="binding site" evidence="1">
    <location>
        <begin position="17"/>
        <end position="24"/>
    </location>
    <ligand>
        <name>GTP</name>
        <dbReference type="ChEBI" id="CHEBI:37565"/>
    </ligand>
</feature>
<feature type="binding site" evidence="1">
    <location>
        <begin position="81"/>
        <end position="85"/>
    </location>
    <ligand>
        <name>GTP</name>
        <dbReference type="ChEBI" id="CHEBI:37565"/>
    </ligand>
</feature>
<feature type="binding site" evidence="1">
    <location>
        <begin position="135"/>
        <end position="138"/>
    </location>
    <ligand>
        <name>GTP</name>
        <dbReference type="ChEBI" id="CHEBI:37565"/>
    </ligand>
</feature>
<dbReference type="EMBL" id="CP001047">
    <property type="protein sequence ID" value="ACF07201.1"/>
    <property type="molecule type" value="Genomic_DNA"/>
</dbReference>
<dbReference type="RefSeq" id="WP_012498158.1">
    <property type="nucleotide sequence ID" value="NC_011025.1"/>
</dbReference>
<dbReference type="SMR" id="B3PME9"/>
<dbReference type="STRING" id="243272.MARTH_orf312"/>
<dbReference type="KEGG" id="mat:MARTH_orf312"/>
<dbReference type="eggNOG" id="COG0480">
    <property type="taxonomic scope" value="Bacteria"/>
</dbReference>
<dbReference type="HOGENOM" id="CLU_002794_4_1_14"/>
<dbReference type="Proteomes" id="UP000008812">
    <property type="component" value="Chromosome"/>
</dbReference>
<dbReference type="GO" id="GO:0005737">
    <property type="term" value="C:cytoplasm"/>
    <property type="evidence" value="ECO:0007669"/>
    <property type="project" value="UniProtKB-SubCell"/>
</dbReference>
<dbReference type="GO" id="GO:0005525">
    <property type="term" value="F:GTP binding"/>
    <property type="evidence" value="ECO:0007669"/>
    <property type="project" value="UniProtKB-UniRule"/>
</dbReference>
<dbReference type="GO" id="GO:0003924">
    <property type="term" value="F:GTPase activity"/>
    <property type="evidence" value="ECO:0007669"/>
    <property type="project" value="InterPro"/>
</dbReference>
<dbReference type="GO" id="GO:0003746">
    <property type="term" value="F:translation elongation factor activity"/>
    <property type="evidence" value="ECO:0007669"/>
    <property type="project" value="UniProtKB-UniRule"/>
</dbReference>
<dbReference type="GO" id="GO:0032790">
    <property type="term" value="P:ribosome disassembly"/>
    <property type="evidence" value="ECO:0007669"/>
    <property type="project" value="TreeGrafter"/>
</dbReference>
<dbReference type="CDD" id="cd01886">
    <property type="entry name" value="EF-G"/>
    <property type="match status" value="1"/>
</dbReference>
<dbReference type="CDD" id="cd16262">
    <property type="entry name" value="EFG_III"/>
    <property type="match status" value="1"/>
</dbReference>
<dbReference type="CDD" id="cd01434">
    <property type="entry name" value="EFG_mtEFG1_IV"/>
    <property type="match status" value="1"/>
</dbReference>
<dbReference type="CDD" id="cd03713">
    <property type="entry name" value="EFG_mtEFG_C"/>
    <property type="match status" value="1"/>
</dbReference>
<dbReference type="CDD" id="cd04088">
    <property type="entry name" value="EFG_mtEFG_II"/>
    <property type="match status" value="1"/>
</dbReference>
<dbReference type="FunFam" id="2.40.30.10:FF:000006">
    <property type="entry name" value="Elongation factor G"/>
    <property type="match status" value="1"/>
</dbReference>
<dbReference type="FunFam" id="3.30.230.10:FF:000003">
    <property type="entry name" value="Elongation factor G"/>
    <property type="match status" value="1"/>
</dbReference>
<dbReference type="FunFam" id="3.30.70.240:FF:000001">
    <property type="entry name" value="Elongation factor G"/>
    <property type="match status" value="1"/>
</dbReference>
<dbReference type="FunFam" id="3.30.70.870:FF:000001">
    <property type="entry name" value="Elongation factor G"/>
    <property type="match status" value="1"/>
</dbReference>
<dbReference type="FunFam" id="3.40.50.300:FF:000029">
    <property type="entry name" value="Elongation factor G"/>
    <property type="match status" value="1"/>
</dbReference>
<dbReference type="Gene3D" id="3.30.230.10">
    <property type="match status" value="1"/>
</dbReference>
<dbReference type="Gene3D" id="3.30.70.240">
    <property type="match status" value="1"/>
</dbReference>
<dbReference type="Gene3D" id="3.30.70.870">
    <property type="entry name" value="Elongation Factor G (Translational Gtpase), domain 3"/>
    <property type="match status" value="1"/>
</dbReference>
<dbReference type="Gene3D" id="3.40.50.300">
    <property type="entry name" value="P-loop containing nucleotide triphosphate hydrolases"/>
    <property type="match status" value="1"/>
</dbReference>
<dbReference type="Gene3D" id="2.40.30.10">
    <property type="entry name" value="Translation factors"/>
    <property type="match status" value="1"/>
</dbReference>
<dbReference type="HAMAP" id="MF_00054_B">
    <property type="entry name" value="EF_G_EF_2_B"/>
    <property type="match status" value="1"/>
</dbReference>
<dbReference type="InterPro" id="IPR041095">
    <property type="entry name" value="EFG_II"/>
</dbReference>
<dbReference type="InterPro" id="IPR009022">
    <property type="entry name" value="EFG_III"/>
</dbReference>
<dbReference type="InterPro" id="IPR035647">
    <property type="entry name" value="EFG_III/V"/>
</dbReference>
<dbReference type="InterPro" id="IPR047872">
    <property type="entry name" value="EFG_IV"/>
</dbReference>
<dbReference type="InterPro" id="IPR035649">
    <property type="entry name" value="EFG_V"/>
</dbReference>
<dbReference type="InterPro" id="IPR000640">
    <property type="entry name" value="EFG_V-like"/>
</dbReference>
<dbReference type="InterPro" id="IPR004161">
    <property type="entry name" value="EFTu-like_2"/>
</dbReference>
<dbReference type="InterPro" id="IPR031157">
    <property type="entry name" value="G_TR_CS"/>
</dbReference>
<dbReference type="InterPro" id="IPR027417">
    <property type="entry name" value="P-loop_NTPase"/>
</dbReference>
<dbReference type="InterPro" id="IPR020568">
    <property type="entry name" value="Ribosomal_Su5_D2-typ_SF"/>
</dbReference>
<dbReference type="InterPro" id="IPR014721">
    <property type="entry name" value="Ribsml_uS5_D2-typ_fold_subgr"/>
</dbReference>
<dbReference type="InterPro" id="IPR005225">
    <property type="entry name" value="Small_GTP-bd"/>
</dbReference>
<dbReference type="InterPro" id="IPR000795">
    <property type="entry name" value="T_Tr_GTP-bd_dom"/>
</dbReference>
<dbReference type="InterPro" id="IPR009000">
    <property type="entry name" value="Transl_B-barrel_sf"/>
</dbReference>
<dbReference type="InterPro" id="IPR004540">
    <property type="entry name" value="Transl_elong_EFG/EF2"/>
</dbReference>
<dbReference type="InterPro" id="IPR005517">
    <property type="entry name" value="Transl_elong_EFG/EF2_IV"/>
</dbReference>
<dbReference type="NCBIfam" id="TIGR00484">
    <property type="entry name" value="EF-G"/>
    <property type="match status" value="1"/>
</dbReference>
<dbReference type="NCBIfam" id="NF009381">
    <property type="entry name" value="PRK12740.1-5"/>
    <property type="match status" value="1"/>
</dbReference>
<dbReference type="NCBIfam" id="TIGR00231">
    <property type="entry name" value="small_GTP"/>
    <property type="match status" value="1"/>
</dbReference>
<dbReference type="PANTHER" id="PTHR43261:SF1">
    <property type="entry name" value="RIBOSOME-RELEASING FACTOR 2, MITOCHONDRIAL"/>
    <property type="match status" value="1"/>
</dbReference>
<dbReference type="PANTHER" id="PTHR43261">
    <property type="entry name" value="TRANSLATION ELONGATION FACTOR G-RELATED"/>
    <property type="match status" value="1"/>
</dbReference>
<dbReference type="Pfam" id="PF00679">
    <property type="entry name" value="EFG_C"/>
    <property type="match status" value="1"/>
</dbReference>
<dbReference type="Pfam" id="PF14492">
    <property type="entry name" value="EFG_III"/>
    <property type="match status" value="1"/>
</dbReference>
<dbReference type="Pfam" id="PF03764">
    <property type="entry name" value="EFG_IV"/>
    <property type="match status" value="1"/>
</dbReference>
<dbReference type="Pfam" id="PF00009">
    <property type="entry name" value="GTP_EFTU"/>
    <property type="match status" value="1"/>
</dbReference>
<dbReference type="Pfam" id="PF03144">
    <property type="entry name" value="GTP_EFTU_D2"/>
    <property type="match status" value="1"/>
</dbReference>
<dbReference type="PRINTS" id="PR00315">
    <property type="entry name" value="ELONGATNFCT"/>
</dbReference>
<dbReference type="SMART" id="SM00838">
    <property type="entry name" value="EFG_C"/>
    <property type="match status" value="1"/>
</dbReference>
<dbReference type="SMART" id="SM00889">
    <property type="entry name" value="EFG_IV"/>
    <property type="match status" value="1"/>
</dbReference>
<dbReference type="SUPFAM" id="SSF54980">
    <property type="entry name" value="EF-G C-terminal domain-like"/>
    <property type="match status" value="2"/>
</dbReference>
<dbReference type="SUPFAM" id="SSF52540">
    <property type="entry name" value="P-loop containing nucleoside triphosphate hydrolases"/>
    <property type="match status" value="1"/>
</dbReference>
<dbReference type="SUPFAM" id="SSF54211">
    <property type="entry name" value="Ribosomal protein S5 domain 2-like"/>
    <property type="match status" value="1"/>
</dbReference>
<dbReference type="SUPFAM" id="SSF50447">
    <property type="entry name" value="Translation proteins"/>
    <property type="match status" value="1"/>
</dbReference>
<dbReference type="PROSITE" id="PS00301">
    <property type="entry name" value="G_TR_1"/>
    <property type="match status" value="1"/>
</dbReference>
<dbReference type="PROSITE" id="PS51722">
    <property type="entry name" value="G_TR_2"/>
    <property type="match status" value="1"/>
</dbReference>
<comment type="function">
    <text evidence="1">Catalyzes the GTP-dependent ribosomal translocation step during translation elongation. During this step, the ribosome changes from the pre-translocational (PRE) to the post-translocational (POST) state as the newly formed A-site-bound peptidyl-tRNA and P-site-bound deacylated tRNA move to the P and E sites, respectively. Catalyzes the coordinated movement of the two tRNA molecules, the mRNA and conformational changes in the ribosome.</text>
</comment>
<comment type="subcellular location">
    <subcellularLocation>
        <location evidence="1">Cytoplasm</location>
    </subcellularLocation>
</comment>
<comment type="similarity">
    <text evidence="1">Belongs to the TRAFAC class translation factor GTPase superfamily. Classic translation factor GTPase family. EF-G/EF-2 subfamily.</text>
</comment>
<reference key="1">
    <citation type="journal article" date="2008" name="Infect. Immun.">
        <title>Genome of Mycoplasma arthritidis.</title>
        <authorList>
            <person name="Dybvig K."/>
            <person name="Zuhua C."/>
            <person name="Lao P."/>
            <person name="Jordan D.S."/>
            <person name="French C.T."/>
            <person name="Tu A.H."/>
            <person name="Loraine A.E."/>
        </authorList>
    </citation>
    <scope>NUCLEOTIDE SEQUENCE [LARGE SCALE GENOMIC DNA]</scope>
    <source>
        <strain>158L3-1</strain>
    </source>
</reference>
<sequence length="697" mass="77771">MAREYKLEDYRNIGIMAHIDAGKTTTTERVLFHTGKIHKIGETHEGESQMDWMVQEQERGITITSAATTAYWGGKRLNIIDTPGHVDFTVEVERSLRVLDGAVAVLDAQSGVEPQTETVWRQATNYNVPRIVYVNKMDKAGANFKASTESLRKLLGANAHPIQLNIGEEAQFTGIIDLVEMKAYEFDGKPEENMKEIPIPAHLLDEATLMRSSLIESVADFDEEIMEALLEEKEVSIEKIKAAIRKATLSATYFPVVCGTSFKNKGVKLMLNAIVDYLPSPLDIPPMKAYKGEGEISIPASDDEFFSSLAFKVMNDPYVGNLTFFRVYSGILNKGTYLYNSTKGEKERIGRILLMHANSRTDIDEVRTGDIGAAVGLKFTTTGDTLIDEKHKDIVLENMNFPEPVISQALEPASKDASEKLSLALQRLAAEDPTFKYYTDEETGQTIIAGMGELHLDIIVDRLKREFKVAANVGAPQVSYRETITKSAEVEGIHKKQSGGKGQYGHVWIKYEPNPDKGFEFVDKIVGGKIPKEYIKSIEKGLKEKMEIGILAGYPLIDVKATLFDGSYHEVDSSELAYKIAASKSLTKGREMLGTVLLEPIMDVAVVIPEDFFGDVMGDISRRRGQVRDNETRNDGAHVIKAYIPLSEMFGYATELRSMTTGRGTYQMWFDHYEKLPRNLADEIIKKRGGKVKIDED</sequence>
<keyword id="KW-0963">Cytoplasm</keyword>
<keyword id="KW-0251">Elongation factor</keyword>
<keyword id="KW-0342">GTP-binding</keyword>
<keyword id="KW-0547">Nucleotide-binding</keyword>
<keyword id="KW-0648">Protein biosynthesis</keyword>
<keyword id="KW-1185">Reference proteome</keyword>